<protein>
    <recommendedName>
        <fullName evidence="6">Cytochrome P450 monooxygenase COX2</fullName>
        <ecNumber evidence="4">1.-.-.-</ecNumber>
    </recommendedName>
    <alternativeName>
        <fullName evidence="6">Alpha-cuprenene oxidase 2</fullName>
    </alternativeName>
</protein>
<reference key="1">
    <citation type="journal article" date="2010" name="Proc. Natl. Acad. Sci. U.S.A.">
        <title>Insights into evolution of multicellular fungi from the assembled chromosomes of the mushroom Coprinopsis cinerea (Coprinus cinereus).</title>
        <authorList>
            <person name="Stajich J.E."/>
            <person name="Wilke S.K."/>
            <person name="Ahren D."/>
            <person name="Au C.H."/>
            <person name="Birren B.W."/>
            <person name="Borodovsky M."/>
            <person name="Burns C."/>
            <person name="Canbaeck B."/>
            <person name="Casselton L.A."/>
            <person name="Cheng C.K."/>
            <person name="Deng J."/>
            <person name="Dietrich F.S."/>
            <person name="Fargo D.C."/>
            <person name="Farman M.L."/>
            <person name="Gathman A.C."/>
            <person name="Goldberg J."/>
            <person name="Guigo R."/>
            <person name="Hoegger P.J."/>
            <person name="Hooker J.B."/>
            <person name="Huggins A."/>
            <person name="James T.Y."/>
            <person name="Kamada T."/>
            <person name="Kilaru S."/>
            <person name="Kodira C."/>
            <person name="Kuees U."/>
            <person name="Kupfer D."/>
            <person name="Kwan H.S."/>
            <person name="Lomsadze A."/>
            <person name="Li W."/>
            <person name="Lilly W.W."/>
            <person name="Ma L.-J."/>
            <person name="Mackey A.J."/>
            <person name="Manning G."/>
            <person name="Martin F."/>
            <person name="Muraguchi H."/>
            <person name="Natvig D.O."/>
            <person name="Palmerini H."/>
            <person name="Ramesh M.A."/>
            <person name="Rehmeyer C.J."/>
            <person name="Roe B.A."/>
            <person name="Shenoy N."/>
            <person name="Stanke M."/>
            <person name="Ter-Hovhannisyan V."/>
            <person name="Tunlid A."/>
            <person name="Velagapudi R."/>
            <person name="Vision T.J."/>
            <person name="Zeng Q."/>
            <person name="Zolan M.E."/>
            <person name="Pukkila P.J."/>
        </authorList>
    </citation>
    <scope>NUCLEOTIDE SEQUENCE [LARGE SCALE GENOMIC DNA]</scope>
    <source>
        <strain>Okayama-7 / 130 / ATCC MYA-4618 / FGSC 9003</strain>
    </source>
</reference>
<reference key="2">
    <citation type="journal article" date="2009" name="Mol. Microbiol.">
        <title>Diversity of sesquiterpene synthases in the basidiomycete Coprinus cinereus.</title>
        <authorList>
            <person name="Agger S."/>
            <person name="Lopez-Gallego F."/>
            <person name="Schmidt-Dannert C."/>
        </authorList>
    </citation>
    <scope>FUNCTION</scope>
    <scope>CATALYTIC ACTIVITY</scope>
</reference>
<reference key="3">
    <citation type="journal article" date="2010" name="ChemBioChem">
        <title>Sesquiterpene synthases Cop4 and Cop6 from Coprinus cinereus: catalytic promiscuity and cyclization of farnesyl pyrophosphate geometric isomers.</title>
        <authorList>
            <person name="Lopez-Gallego F."/>
            <person name="Agger S.A."/>
            <person name="Abate-Pella D."/>
            <person name="Distefano M.D."/>
            <person name="Schmidt-Dannert C."/>
        </authorList>
    </citation>
    <scope>FUNCTION</scope>
</reference>
<comment type="function">
    <text evidence="4 5">Cytochrome P450 monooxygenase; part of the gene cluster that mediates the biosynthesis of alpha-cuprenene and oxidized derivatives (PubMed:19400802). The alpha-cuprenene synthase COP6 is the only sesquiterpene synthase identified in C.cinereus that appears to be part of a biosynthetic gene cluster and is highly specific since it catalyzes the cyclization of (2E,6E)-farnesyl diphosphate into only one product, alpha-cuprenene (PubMed:19400802, PubMed:20419721). The cytochrome P450 monooxygenase COX2 then oxidizes the cyclohexadiene ring of alpha-cuprenene at positions 1 and 4, yielding first alpha-cuparene, followed by alpha-cuparophenol and a further yet unidentified compound resulting from one additional oxidation step (PubMed:19400802). The cytochrome P450 monooxygenase COX1 then likely catalyzes the oxidation at position 9 of the pentane ring of alpha-cuprenene to give the corresponding hydroxy or ketone derivatives (PubMed:19400802).</text>
</comment>
<comment type="cofactor">
    <cofactor evidence="1">
        <name>heme</name>
        <dbReference type="ChEBI" id="CHEBI:30413"/>
    </cofactor>
</comment>
<comment type="pathway">
    <text evidence="4">Secondary metabolite biosynthesis.</text>
</comment>
<comment type="subcellular location">
    <subcellularLocation>
        <location evidence="2">Membrane</location>
        <topology evidence="2">Single-pass membrane protein</topology>
    </subcellularLocation>
</comment>
<comment type="similarity">
    <text evidence="7">Belongs to the cytochrome P450 family.</text>
</comment>
<name>COX2_COPC7</name>
<accession>A8NCK6</accession>
<proteinExistence type="evidence at protein level"/>
<feature type="chain" id="PRO_0000444638" description="Cytochrome P450 monooxygenase COX2">
    <location>
        <begin position="1"/>
        <end position="526"/>
    </location>
</feature>
<feature type="transmembrane region" description="Helical" evidence="2">
    <location>
        <begin position="12"/>
        <end position="31"/>
    </location>
</feature>
<feature type="binding site" description="axial binding residue" evidence="1">
    <location>
        <position position="450"/>
    </location>
    <ligand>
        <name>heme</name>
        <dbReference type="ChEBI" id="CHEBI:30413"/>
    </ligand>
    <ligandPart>
        <name>Fe</name>
        <dbReference type="ChEBI" id="CHEBI:18248"/>
    </ligandPart>
</feature>
<feature type="glycosylation site" description="N-linked (GlcNAc...) asparagine" evidence="3">
    <location>
        <position position="11"/>
    </location>
</feature>
<feature type="glycosylation site" description="N-linked (GlcNAc...) asparagine" evidence="3">
    <location>
        <position position="302"/>
    </location>
</feature>
<organism>
    <name type="scientific">Coprinopsis cinerea (strain Okayama-7 / 130 / ATCC MYA-4618 / FGSC 9003)</name>
    <name type="common">Inky cap fungus</name>
    <name type="synonym">Hormographiella aspergillata</name>
    <dbReference type="NCBI Taxonomy" id="240176"/>
    <lineage>
        <taxon>Eukaryota</taxon>
        <taxon>Fungi</taxon>
        <taxon>Dikarya</taxon>
        <taxon>Basidiomycota</taxon>
        <taxon>Agaricomycotina</taxon>
        <taxon>Agaricomycetes</taxon>
        <taxon>Agaricomycetidae</taxon>
        <taxon>Agaricales</taxon>
        <taxon>Agaricineae</taxon>
        <taxon>Psathyrellaceae</taxon>
        <taxon>Coprinopsis</taxon>
    </lineage>
</organism>
<gene>
    <name evidence="6" type="primary">COX2</name>
    <name type="ORF">CC1G_03564</name>
</gene>
<dbReference type="EC" id="1.-.-.-" evidence="4"/>
<dbReference type="EMBL" id="AACS02000009">
    <property type="protein sequence ID" value="EAU89299.1"/>
    <property type="molecule type" value="Genomic_DNA"/>
</dbReference>
<dbReference type="RefSeq" id="XP_001832550.1">
    <property type="nucleotide sequence ID" value="XM_001832498.2"/>
</dbReference>
<dbReference type="SMR" id="A8NCK6"/>
<dbReference type="GlyCosmos" id="A8NCK6">
    <property type="glycosylation" value="2 sites, No reported glycans"/>
</dbReference>
<dbReference type="GeneID" id="6009037"/>
<dbReference type="KEGG" id="cci:CC1G_03564"/>
<dbReference type="VEuPathDB" id="FungiDB:CC1G_03564"/>
<dbReference type="eggNOG" id="KOG0156">
    <property type="taxonomic scope" value="Eukaryota"/>
</dbReference>
<dbReference type="InParanoid" id="A8NCK6"/>
<dbReference type="OMA" id="WAMLLMM"/>
<dbReference type="OrthoDB" id="2789670at2759"/>
<dbReference type="Proteomes" id="UP000001861">
    <property type="component" value="Unassembled WGS sequence"/>
</dbReference>
<dbReference type="GO" id="GO:0016020">
    <property type="term" value="C:membrane"/>
    <property type="evidence" value="ECO:0007669"/>
    <property type="project" value="UniProtKB-SubCell"/>
</dbReference>
<dbReference type="GO" id="GO:0020037">
    <property type="term" value="F:heme binding"/>
    <property type="evidence" value="ECO:0007669"/>
    <property type="project" value="InterPro"/>
</dbReference>
<dbReference type="GO" id="GO:0005506">
    <property type="term" value="F:iron ion binding"/>
    <property type="evidence" value="ECO:0007669"/>
    <property type="project" value="InterPro"/>
</dbReference>
<dbReference type="GO" id="GO:0004497">
    <property type="term" value="F:monooxygenase activity"/>
    <property type="evidence" value="ECO:0007669"/>
    <property type="project" value="UniProtKB-KW"/>
</dbReference>
<dbReference type="GO" id="GO:0016705">
    <property type="term" value="F:oxidoreductase activity, acting on paired donors, with incorporation or reduction of molecular oxygen"/>
    <property type="evidence" value="ECO:0007669"/>
    <property type="project" value="InterPro"/>
</dbReference>
<dbReference type="CDD" id="cd11065">
    <property type="entry name" value="CYP64-like"/>
    <property type="match status" value="1"/>
</dbReference>
<dbReference type="Gene3D" id="1.10.630.10">
    <property type="entry name" value="Cytochrome P450"/>
    <property type="match status" value="1"/>
</dbReference>
<dbReference type="InterPro" id="IPR001128">
    <property type="entry name" value="Cyt_P450"/>
</dbReference>
<dbReference type="InterPro" id="IPR017972">
    <property type="entry name" value="Cyt_P450_CS"/>
</dbReference>
<dbReference type="InterPro" id="IPR002401">
    <property type="entry name" value="Cyt_P450_E_grp-I"/>
</dbReference>
<dbReference type="InterPro" id="IPR036396">
    <property type="entry name" value="Cyt_P450_sf"/>
</dbReference>
<dbReference type="InterPro" id="IPR050364">
    <property type="entry name" value="Cytochrome_P450_fung"/>
</dbReference>
<dbReference type="PANTHER" id="PTHR46300:SF7">
    <property type="entry name" value="P450, PUTATIVE (EUROFUNG)-RELATED"/>
    <property type="match status" value="1"/>
</dbReference>
<dbReference type="PANTHER" id="PTHR46300">
    <property type="entry name" value="P450, PUTATIVE (EUROFUNG)-RELATED-RELATED"/>
    <property type="match status" value="1"/>
</dbReference>
<dbReference type="Pfam" id="PF00067">
    <property type="entry name" value="p450"/>
    <property type="match status" value="1"/>
</dbReference>
<dbReference type="PRINTS" id="PR00463">
    <property type="entry name" value="EP450I"/>
</dbReference>
<dbReference type="SUPFAM" id="SSF48264">
    <property type="entry name" value="Cytochrome P450"/>
    <property type="match status" value="1"/>
</dbReference>
<dbReference type="PROSITE" id="PS00086">
    <property type="entry name" value="CYTOCHROME_P450"/>
    <property type="match status" value="1"/>
</dbReference>
<sequence>MNIVNSLDLSNITTNHVAAAVCAGIAVYAIVAGRNRGKKYPPGPKGHPLIGSLFEMPIQNAHVVYKEWAKTYGDMIFFKVLGQPFLILSSEETITDLLDKRSTIYSSRPRMPMVVELMGWDYTLGLLPYGERWRFLRREFHRFMSPTAVSNYRQIQENSVYTFLNNLVESPEQFSKHLRLFYGSISMKVSYGINVKSAEDQYLLDAEGAMSGFMEAGIPGRFWVDLFPALKYVPSWMPGAEFKRKAARWARLNDISLERPFKHVLDQLKKGVASQSVSATLIEELPDQNSPDRKEKETIARNISATTFLAGIDTIHSTTQAFFYAMAQFPEVQKKAQAEIDAVVGDKRLPTFEDRDQLPYVNALVKELIRWSEVAPLGIYHSTTEDDEYKGYFIPKGTIVMTNAWSILTDPVTYPDPFAFKPERYLKNGVMNPDAPRPEDLAFGRGRRICPGRYLADETLFMTSVGVLAGFNISPPLDKSGKPIKLKNERVGTITLTPPKFECRIEPRSPAIRTMIHDTAESISAL</sequence>
<keyword id="KW-0325">Glycoprotein</keyword>
<keyword id="KW-0349">Heme</keyword>
<keyword id="KW-0408">Iron</keyword>
<keyword id="KW-0472">Membrane</keyword>
<keyword id="KW-0479">Metal-binding</keyword>
<keyword id="KW-0503">Monooxygenase</keyword>
<keyword id="KW-0560">Oxidoreductase</keyword>
<keyword id="KW-1185">Reference proteome</keyword>
<keyword id="KW-0812">Transmembrane</keyword>
<keyword id="KW-1133">Transmembrane helix</keyword>
<evidence type="ECO:0000250" key="1">
    <source>
        <dbReference type="UniProtKB" id="P04798"/>
    </source>
</evidence>
<evidence type="ECO:0000255" key="2"/>
<evidence type="ECO:0000255" key="3">
    <source>
        <dbReference type="PROSITE-ProRule" id="PRU00498"/>
    </source>
</evidence>
<evidence type="ECO:0000269" key="4">
    <source>
    </source>
</evidence>
<evidence type="ECO:0000269" key="5">
    <source>
    </source>
</evidence>
<evidence type="ECO:0000303" key="6">
    <source>
    </source>
</evidence>
<evidence type="ECO:0000305" key="7"/>